<proteinExistence type="evidence at transcript level"/>
<accession>P18560</accession>
<dbReference type="EMBL" id="M36467">
    <property type="protein sequence ID" value="AAA42688.1"/>
    <property type="molecule type" value="Genomic_DNA"/>
</dbReference>
<dbReference type="EMBL" id="U18466">
    <property type="protein sequence ID" value="AAA65243.1"/>
    <property type="molecule type" value="Genomic_DNA"/>
</dbReference>
<dbReference type="PIR" id="E43702">
    <property type="entry name" value="E43702"/>
</dbReference>
<dbReference type="RefSeq" id="NP_042707.1">
    <property type="nucleotide sequence ID" value="NC_001659.2"/>
</dbReference>
<dbReference type="GeneID" id="22220397"/>
<dbReference type="KEGG" id="vg:22220397"/>
<dbReference type="Proteomes" id="UP000000624">
    <property type="component" value="Segment"/>
</dbReference>
<dbReference type="GO" id="GO:0016020">
    <property type="term" value="C:membrane"/>
    <property type="evidence" value="ECO:0007669"/>
    <property type="project" value="UniProtKB-SubCell"/>
</dbReference>
<dbReference type="InterPro" id="IPR004848">
    <property type="entry name" value="ASFV_fam_110"/>
</dbReference>
<dbReference type="Pfam" id="PF01639">
    <property type="entry name" value="v110"/>
    <property type="match status" value="2"/>
</dbReference>
<reference key="1">
    <citation type="journal article" date="1990" name="J. Virol.">
        <title>Multigene families in African swine fever virus: family 110.</title>
        <authorList>
            <person name="Almendral J.M."/>
            <person name="Almazan F."/>
            <person name="Blasco R."/>
            <person name="Vinuela E."/>
        </authorList>
    </citation>
    <scope>NUCLEOTIDE SEQUENCE [GENOMIC DNA]</scope>
</reference>
<reference key="2">
    <citation type="journal article" date="1995" name="Virology">
        <title>Analysis of the complete nucleotide sequence of African swine fever virus.</title>
        <authorList>
            <person name="Yanez R.J."/>
            <person name="Rodriguez J.M."/>
            <person name="Nogal M.L."/>
            <person name="Yuste L."/>
            <person name="Enriquez C."/>
            <person name="Rodriguez J.F."/>
            <person name="Vinuela E."/>
        </authorList>
    </citation>
    <scope>NUCLEOTIDE SEQUENCE [LARGE SCALE GENOMIC DNA]</scope>
</reference>
<reference key="3">
    <citation type="journal article" date="1992" name="J. Virol.">
        <title>Transcriptional analysis of multigene family 110 of African swine fever virus.</title>
        <authorList>
            <person name="Almazan F."/>
            <person name="Rodriguez J.M."/>
            <person name="Andres G."/>
            <person name="Perez R."/>
            <person name="Vinuela E."/>
            <person name="Rodriguez J.F."/>
        </authorList>
    </citation>
    <scope>INDUCTION</scope>
</reference>
<reference key="4">
    <citation type="journal article" date="2020" name="J. Virol.">
        <title>The African Swine Fever Virus Transcriptome.</title>
        <authorList>
            <person name="Cackett G."/>
            <person name="Matelska D."/>
            <person name="Sykora M."/>
            <person name="Portugal R."/>
            <person name="Malecki M."/>
            <person name="Baehler J."/>
            <person name="Dixon L."/>
            <person name="Werner F."/>
        </authorList>
    </citation>
    <scope>INDUCTION</scope>
</reference>
<organismHost>
    <name type="scientific">Ornithodoros</name>
    <name type="common">relapsing fever ticks</name>
    <dbReference type="NCBI Taxonomy" id="6937"/>
</organismHost>
<organismHost>
    <name type="scientific">Sus scrofa</name>
    <name type="common">Pig</name>
    <dbReference type="NCBI Taxonomy" id="9823"/>
</organismHost>
<evidence type="ECO:0000250" key="1"/>
<evidence type="ECO:0000250" key="2">
    <source>
        <dbReference type="UniProtKB" id="A9JLI2"/>
    </source>
</evidence>
<evidence type="ECO:0000255" key="3"/>
<evidence type="ECO:0000269" key="4">
    <source>
    </source>
</evidence>
<evidence type="ECO:0000269" key="5">
    <source>
    </source>
</evidence>
<evidence type="ECO:0000305" key="6"/>
<organism>
    <name type="scientific">African swine fever virus (strain Badajoz 1971 Vero-adapted)</name>
    <name type="common">Ba71V</name>
    <name type="synonym">ASFV</name>
    <dbReference type="NCBI Taxonomy" id="10498"/>
    <lineage>
        <taxon>Viruses</taxon>
        <taxon>Varidnaviria</taxon>
        <taxon>Bamfordvirae</taxon>
        <taxon>Nucleocytoviricota</taxon>
        <taxon>Pokkesviricetes</taxon>
        <taxon>Asfuvirales</taxon>
        <taxon>Asfarviridae</taxon>
        <taxon>Asfivirus</taxon>
        <taxon>African swine fever virus</taxon>
    </lineage>
</organism>
<protein>
    <recommendedName>
        <fullName>Protein MGF 110-1L</fullName>
    </recommendedName>
</protein>
<name>1101L_ASFB7</name>
<feature type="signal peptide" evidence="2">
    <location>
        <begin position="1"/>
        <end position="26"/>
    </location>
</feature>
<feature type="chain" id="PRO_0000036741" description="Protein MGF 110-1L">
    <location>
        <begin position="27"/>
        <end position="270"/>
    </location>
</feature>
<feature type="topological domain" description="Extracellular" evidence="3">
    <location>
        <begin position="27"/>
        <end position="117"/>
    </location>
</feature>
<feature type="transmembrane region" description="Helical" evidence="3">
    <location>
        <begin position="118"/>
        <end position="138"/>
    </location>
</feature>
<feature type="topological domain" description="Cytoplasmic" evidence="3">
    <location>
        <begin position="139"/>
        <end position="145"/>
    </location>
</feature>
<feature type="transmembrane region" description="Helical" evidence="3">
    <location>
        <begin position="146"/>
        <end position="166"/>
    </location>
</feature>
<feature type="topological domain" description="Extracellular" evidence="3">
    <location>
        <begin position="167"/>
        <end position="270"/>
    </location>
</feature>
<feature type="repeat" description="A">
    <location>
        <begin position="27"/>
        <end position="146"/>
    </location>
</feature>
<feature type="repeat" description="B">
    <location>
        <begin position="147"/>
        <end position="270"/>
    </location>
</feature>
<feature type="glycosylation site" description="N-linked (GlcNAc...) asparagine; by host" evidence="3">
    <location>
        <position position="75"/>
    </location>
</feature>
<comment type="function">
    <text evidence="1">Plays a role in virus cell tropism, and may be required for efficient virus replication in macrophages.</text>
</comment>
<comment type="subcellular location">
    <subcellularLocation>
        <location evidence="6">Membrane</location>
        <topology evidence="6">Multi-pass membrane protein</topology>
    </subcellularLocation>
</comment>
<comment type="induction">
    <text evidence="4 5">Expressed in the immediate early phase of the viral replicative cycle.</text>
</comment>
<comment type="similarity">
    <text evidence="6">Belongs to the asfivirus MGF 110 family.</text>
</comment>
<sequence length="270" mass="32387">MLGLQIFTLLSIPTLLYTYEIEPLERTSTPPEKELGYWCTYANHCRFCWDCQDGICRNKAFKNHSPILENNYIANCSIYRRNDFCIYYITSIKPHKTYRTECPQHINHERHEADIRKWQKLLTYGFYLAGCILAVNYIRKRSLQTVMYLLVFLVISFLLSQLMLYGELEDKKHKIGSIPPKRELEHWCTHGKYCNFCWDCQNGICKNKAFKNHPPIGENDFIRYDCWTTHLPNKCSYEKIYKHFNTHIMECSQPTHFKWYDNLMKKQDIM</sequence>
<keyword id="KW-0244">Early protein</keyword>
<keyword id="KW-0325">Glycoprotein</keyword>
<keyword id="KW-0472">Membrane</keyword>
<keyword id="KW-1185">Reference proteome</keyword>
<keyword id="KW-0677">Repeat</keyword>
<keyword id="KW-0732">Signal</keyword>
<keyword id="KW-0812">Transmembrane</keyword>
<keyword id="KW-1133">Transmembrane helix</keyword>
<gene>
    <name type="ordered locus">BA71V-008</name>
    <name type="ORF">L270L</name>
</gene>